<feature type="chain" id="PRO_0000169616" description="Purine ribonucleoside efflux pump NepI">
    <location>
        <begin position="1"/>
        <end position="396"/>
    </location>
</feature>
<feature type="topological domain" description="Cytoplasmic" evidence="6">
    <location>
        <begin position="1"/>
        <end position="21"/>
    </location>
</feature>
<feature type="transmembrane region" description="Helical" evidence="1">
    <location>
        <begin position="22"/>
        <end position="42"/>
    </location>
</feature>
<feature type="topological domain" description="Periplasmic" evidence="6">
    <location>
        <begin position="43"/>
        <end position="54"/>
    </location>
</feature>
<feature type="transmembrane region" description="Helical" evidence="1">
    <location>
        <begin position="55"/>
        <end position="75"/>
    </location>
</feature>
<feature type="topological domain" description="Cytoplasmic" evidence="6">
    <location>
        <begin position="76"/>
        <end position="85"/>
    </location>
</feature>
<feature type="transmembrane region" description="Helical" evidence="1">
    <location>
        <begin position="86"/>
        <end position="106"/>
    </location>
</feature>
<feature type="topological domain" description="Periplasmic" evidence="6">
    <location>
        <position position="107"/>
    </location>
</feature>
<feature type="transmembrane region" description="Helical" evidence="1">
    <location>
        <begin position="108"/>
        <end position="128"/>
    </location>
</feature>
<feature type="topological domain" description="Cytoplasmic" evidence="6">
    <location>
        <begin position="129"/>
        <end position="147"/>
    </location>
</feature>
<feature type="transmembrane region" description="Helical" evidence="1">
    <location>
        <begin position="148"/>
        <end position="168"/>
    </location>
</feature>
<feature type="topological domain" description="Periplasmic" evidence="6">
    <location>
        <begin position="169"/>
        <end position="175"/>
    </location>
</feature>
<feature type="transmembrane region" description="Helical" evidence="1">
    <location>
        <begin position="176"/>
        <end position="196"/>
    </location>
</feature>
<feature type="topological domain" description="Cytoplasmic" evidence="6">
    <location>
        <begin position="197"/>
        <end position="215"/>
    </location>
</feature>
<feature type="transmembrane region" description="Helical" evidence="1">
    <location>
        <begin position="216"/>
        <end position="236"/>
    </location>
</feature>
<feature type="topological domain" description="Periplasmic" evidence="6">
    <location>
        <begin position="237"/>
        <end position="255"/>
    </location>
</feature>
<feature type="transmembrane region" description="Helical" evidence="1">
    <location>
        <begin position="256"/>
        <end position="276"/>
    </location>
</feature>
<feature type="topological domain" description="Cytoplasmic" evidence="6">
    <location>
        <begin position="277"/>
        <end position="281"/>
    </location>
</feature>
<feature type="transmembrane region" description="Helical" evidence="1">
    <location>
        <begin position="282"/>
        <end position="302"/>
    </location>
</feature>
<feature type="topological domain" description="Periplasmic" evidence="6">
    <location>
        <begin position="303"/>
        <end position="305"/>
    </location>
</feature>
<feature type="transmembrane region" description="Helical" evidence="1">
    <location>
        <begin position="306"/>
        <end position="326"/>
    </location>
</feature>
<feature type="topological domain" description="Cytoplasmic" evidence="6">
    <location>
        <begin position="327"/>
        <end position="343"/>
    </location>
</feature>
<feature type="transmembrane region" description="Helical" evidence="1">
    <location>
        <begin position="344"/>
        <end position="364"/>
    </location>
</feature>
<feature type="topological domain" description="Periplasmic" evidence="6">
    <location>
        <begin position="365"/>
        <end position="366"/>
    </location>
</feature>
<feature type="transmembrane region" description="Helical" evidence="1">
    <location>
        <begin position="367"/>
        <end position="387"/>
    </location>
</feature>
<feature type="topological domain" description="Cytoplasmic" evidence="3">
    <location>
        <begin position="388"/>
        <end position="396"/>
    </location>
</feature>
<feature type="sequence variant" description="In strain: BEN2908 / O2:K1:H5 / APEC.">
    <original>V</original>
    <variation>M</variation>
    <location>
        <position position="158"/>
    </location>
</feature>
<feature type="sequence variant" description="In strain: BEN2908 / O2:K1:H5 / APEC.">
    <original>V</original>
    <variation>A</variation>
    <location>
        <position position="182"/>
    </location>
</feature>
<feature type="sequence variant" description="In strain: BEN2908 / O2:K1:H5 / APEC.">
    <original>I</original>
    <variation>V</variation>
    <location>
        <position position="267"/>
    </location>
</feature>
<feature type="sequence variant" description="In strain: BEN2908 / O2:K1:H5 / APEC.">
    <original>LI</original>
    <variation>FV</variation>
    <location>
        <begin position="289"/>
        <end position="290"/>
    </location>
</feature>
<feature type="sequence variant" description="In strain: BEN2908 / O2:K1:H5 / APEC.">
    <original>V</original>
    <variation>L</variation>
    <location>
        <position position="293"/>
    </location>
</feature>
<feature type="sequence variant" description="In strain: BEN2908 / O2:K1:H5 / APEC.">
    <original>V</original>
    <variation>I</variation>
    <location>
        <position position="322"/>
    </location>
</feature>
<organism>
    <name type="scientific">Escherichia coli (strain K12)</name>
    <dbReference type="NCBI Taxonomy" id="83333"/>
    <lineage>
        <taxon>Bacteria</taxon>
        <taxon>Pseudomonadati</taxon>
        <taxon>Pseudomonadota</taxon>
        <taxon>Gammaproteobacteria</taxon>
        <taxon>Enterobacterales</taxon>
        <taxon>Enterobacteriaceae</taxon>
        <taxon>Escherichia</taxon>
    </lineage>
</organism>
<dbReference type="EMBL" id="L10328">
    <property type="protein sequence ID" value="AAA62014.1"/>
    <property type="status" value="ALT_INIT"/>
    <property type="molecule type" value="Genomic_DNA"/>
</dbReference>
<dbReference type="EMBL" id="U00096">
    <property type="protein sequence ID" value="AAC76685.2"/>
    <property type="molecule type" value="Genomic_DNA"/>
</dbReference>
<dbReference type="EMBL" id="AP009048">
    <property type="protein sequence ID" value="BAE77631.1"/>
    <property type="status" value="ALT_INIT"/>
    <property type="molecule type" value="Genomic_DNA"/>
</dbReference>
<dbReference type="EMBL" id="AY857617">
    <property type="protein sequence ID" value="AAW51767.1"/>
    <property type="status" value="ALT_FRAME"/>
    <property type="molecule type" value="Genomic_DNA"/>
</dbReference>
<dbReference type="PIR" id="G65167">
    <property type="entry name" value="G65167"/>
</dbReference>
<dbReference type="RefSeq" id="NP_418118.2">
    <property type="nucleotide sequence ID" value="NC_000913.3"/>
</dbReference>
<dbReference type="RefSeq" id="WP_001288549.1">
    <property type="nucleotide sequence ID" value="NZ_SSZK01000043.1"/>
</dbReference>
<dbReference type="SMR" id="P0ADL1"/>
<dbReference type="BioGRID" id="4261472">
    <property type="interactions" value="10"/>
</dbReference>
<dbReference type="DIP" id="DIP-48180N"/>
<dbReference type="FunCoup" id="P0ADL1">
    <property type="interactions" value="173"/>
</dbReference>
<dbReference type="STRING" id="511145.b3662"/>
<dbReference type="TCDB" id="2.A.1.2.26">
    <property type="family name" value="the major facilitator superfamily (mfs)"/>
</dbReference>
<dbReference type="PaxDb" id="511145-b3662"/>
<dbReference type="EnsemblBacteria" id="AAC76685">
    <property type="protein sequence ID" value="AAC76685"/>
    <property type="gene ID" value="b3662"/>
</dbReference>
<dbReference type="GeneID" id="75205376"/>
<dbReference type="GeneID" id="948213"/>
<dbReference type="KEGG" id="ecj:JW5938"/>
<dbReference type="KEGG" id="eco:b3662"/>
<dbReference type="KEGG" id="ecoc:C3026_19850"/>
<dbReference type="PATRIC" id="fig|511145.12.peg.3784"/>
<dbReference type="EchoBASE" id="EB1640"/>
<dbReference type="eggNOG" id="COG2814">
    <property type="taxonomic scope" value="Bacteria"/>
</dbReference>
<dbReference type="HOGENOM" id="CLU_001265_61_1_6"/>
<dbReference type="InParanoid" id="P0ADL1"/>
<dbReference type="OrthoDB" id="9812189at2"/>
<dbReference type="PhylomeDB" id="P0ADL1"/>
<dbReference type="BioCyc" id="EcoCyc:YICM-MONOMER"/>
<dbReference type="BioCyc" id="MetaCyc:YICM-MONOMER"/>
<dbReference type="PRO" id="PR:P0ADL1"/>
<dbReference type="Proteomes" id="UP000000625">
    <property type="component" value="Chromosome"/>
</dbReference>
<dbReference type="GO" id="GO:0005886">
    <property type="term" value="C:plasma membrane"/>
    <property type="evidence" value="ECO:0000314"/>
    <property type="project" value="EcoCyc"/>
</dbReference>
<dbReference type="GO" id="GO:0015297">
    <property type="term" value="F:antiporter activity"/>
    <property type="evidence" value="ECO:0007669"/>
    <property type="project" value="UniProtKB-KW"/>
</dbReference>
<dbReference type="GO" id="GO:0015211">
    <property type="term" value="F:purine nucleoside transmembrane transporter activity"/>
    <property type="evidence" value="ECO:0000315"/>
    <property type="project" value="EcoCyc"/>
</dbReference>
<dbReference type="GO" id="GO:0022857">
    <property type="term" value="F:transmembrane transporter activity"/>
    <property type="evidence" value="ECO:0000318"/>
    <property type="project" value="GO_Central"/>
</dbReference>
<dbReference type="GO" id="GO:0015860">
    <property type="term" value="P:purine nucleoside transmembrane transport"/>
    <property type="evidence" value="ECO:0000315"/>
    <property type="project" value="EcoCyc"/>
</dbReference>
<dbReference type="GO" id="GO:0055085">
    <property type="term" value="P:transmembrane transport"/>
    <property type="evidence" value="ECO:0000318"/>
    <property type="project" value="GO_Central"/>
</dbReference>
<dbReference type="CDD" id="cd17324">
    <property type="entry name" value="MFS_NepI_like"/>
    <property type="match status" value="1"/>
</dbReference>
<dbReference type="FunFam" id="1.20.1250.20:FF:000113">
    <property type="entry name" value="Purine ribonucleoside efflux pump NepI"/>
    <property type="match status" value="1"/>
</dbReference>
<dbReference type="Gene3D" id="1.20.1250.20">
    <property type="entry name" value="MFS general substrate transporter like domains"/>
    <property type="match status" value="1"/>
</dbReference>
<dbReference type="HAMAP" id="MF_01189">
    <property type="entry name" value="MFS_NepI"/>
    <property type="match status" value="1"/>
</dbReference>
<dbReference type="InterPro" id="IPR011701">
    <property type="entry name" value="MFS"/>
</dbReference>
<dbReference type="InterPro" id="IPR020846">
    <property type="entry name" value="MFS_dom"/>
</dbReference>
<dbReference type="InterPro" id="IPR050189">
    <property type="entry name" value="MFS_Efflux_Transporters"/>
</dbReference>
<dbReference type="InterPro" id="IPR023680">
    <property type="entry name" value="MFS_NepI"/>
</dbReference>
<dbReference type="InterPro" id="IPR036259">
    <property type="entry name" value="MFS_trans_sf"/>
</dbReference>
<dbReference type="NCBIfam" id="NF007578">
    <property type="entry name" value="PRK10213.1"/>
    <property type="match status" value="1"/>
</dbReference>
<dbReference type="PANTHER" id="PTHR43124">
    <property type="entry name" value="PURINE EFFLUX PUMP PBUE"/>
    <property type="match status" value="1"/>
</dbReference>
<dbReference type="PANTHER" id="PTHR43124:SF5">
    <property type="entry name" value="PURINE RIBONUCLEOSIDE EFFLUX PUMP NEPI"/>
    <property type="match status" value="1"/>
</dbReference>
<dbReference type="Pfam" id="PF07690">
    <property type="entry name" value="MFS_1"/>
    <property type="match status" value="1"/>
</dbReference>
<dbReference type="SUPFAM" id="SSF103473">
    <property type="entry name" value="MFS general substrate transporter"/>
    <property type="match status" value="1"/>
</dbReference>
<dbReference type="PROSITE" id="PS50850">
    <property type="entry name" value="MFS"/>
    <property type="match status" value="1"/>
</dbReference>
<proteinExistence type="evidence at protein level"/>
<keyword id="KW-0050">Antiport</keyword>
<keyword id="KW-0997">Cell inner membrane</keyword>
<keyword id="KW-1003">Cell membrane</keyword>
<keyword id="KW-0472">Membrane</keyword>
<keyword id="KW-1185">Reference proteome</keyword>
<keyword id="KW-0812">Transmembrane</keyword>
<keyword id="KW-1133">Transmembrane helix</keyword>
<keyword id="KW-0813">Transport</keyword>
<accession>P0ADL1</accession>
<accession>P31438</accession>
<accession>P76725</accession>
<accession>Q2M7X5</accession>
<accession>Q5I3I1</accession>
<protein>
    <recommendedName>
        <fullName evidence="2 6">Purine ribonucleoside efflux pump NepI</fullName>
    </recommendedName>
    <alternativeName>
        <fullName evidence="5">Nucleoside efflux permease-inosine</fullName>
    </alternativeName>
</protein>
<gene>
    <name evidence="2 5" type="primary">nepI</name>
    <name type="synonym">yicM</name>
    <name type="ordered locus">b3662</name>
    <name type="ordered locus">JW5938</name>
</gene>
<comment type="function">
    <text evidence="4">Involved in the efflux of purine ribonucleosides, such as inosine and guanosine (PubMed:16040204). Adenosine may also be a substrate (PubMed:16040204). Confers resistance to the hypoxanthine analog 6-mercaptopurine, however the level of resistance is rather low (PubMed:16040204).</text>
</comment>
<comment type="catalytic activity">
    <reaction evidence="2 4">
        <text>inosine(in) + H(+)(out) = inosine(out) + H(+)(in)</text>
        <dbReference type="Rhea" id="RHEA:29211"/>
        <dbReference type="ChEBI" id="CHEBI:15378"/>
        <dbReference type="ChEBI" id="CHEBI:17596"/>
    </reaction>
    <physiologicalReaction direction="left-to-right" evidence="2 4">
        <dbReference type="Rhea" id="RHEA:29212"/>
    </physiologicalReaction>
</comment>
<comment type="catalytic activity">
    <reaction evidence="2 4">
        <text>guanosine(in) + H(+)(out) = guanosine(out) + H(+)(in)</text>
        <dbReference type="Rhea" id="RHEA:29583"/>
        <dbReference type="ChEBI" id="CHEBI:15378"/>
        <dbReference type="ChEBI" id="CHEBI:16750"/>
    </reaction>
    <physiologicalReaction direction="left-to-right" evidence="2 4">
        <dbReference type="Rhea" id="RHEA:29584"/>
    </physiologicalReaction>
</comment>
<comment type="activity regulation">
    <text evidence="4">Reducing the electrochemical proton gradient across the plasma membrane by the addition of the protonophore carbonyl cyanide m-chlorophenylhydrazone (CCCP) leads to a drastic reduction in the rate of inosine excretion.</text>
</comment>
<comment type="subcellular location">
    <subcellularLocation>
        <location evidence="2 3">Cell inner membrane</location>
        <topology evidence="1">Multi-pass membrane protein</topology>
    </subcellularLocation>
</comment>
<comment type="induction">
    <text evidence="4">In stationary phase.</text>
</comment>
<comment type="disruption phenotype">
    <text evidence="4">Inactivation of the gene leads to increased susceptibility to purine ribonucleosides.</text>
</comment>
<comment type="similarity">
    <text evidence="2 6">Belongs to the major facilitator superfamily. DHA1 family. NepI (TC 2.A.1.2.26) subfamily.</text>
</comment>
<comment type="sequence caution" evidence="6">
    <conflict type="erroneous initiation">
        <sequence resource="EMBL-CDS" id="AAA62014"/>
    </conflict>
</comment>
<comment type="sequence caution" evidence="6">
    <conflict type="frameshift">
        <sequence resource="EMBL-CDS" id="AAW51767"/>
    </conflict>
</comment>
<comment type="sequence caution" evidence="6">
    <conflict type="erroneous initiation">
        <sequence resource="EMBL-CDS" id="BAE77631"/>
    </conflict>
</comment>
<reference key="1">
    <citation type="journal article" date="1993" name="Genomics">
        <title>DNA sequence and analysis of 136 kilobases of the Escherichia coli genome: organizational symmetry around the origin of replication.</title>
        <authorList>
            <person name="Burland V.D."/>
            <person name="Plunkett G. III"/>
            <person name="Daniels D.L."/>
            <person name="Blattner F.R."/>
        </authorList>
    </citation>
    <scope>NUCLEOTIDE SEQUENCE [LARGE SCALE GENOMIC DNA]</scope>
    <source>
        <strain>K12 / MG1655 / ATCC 47076</strain>
    </source>
</reference>
<reference key="2">
    <citation type="journal article" date="1997" name="Science">
        <title>The complete genome sequence of Escherichia coli K-12.</title>
        <authorList>
            <person name="Blattner F.R."/>
            <person name="Plunkett G. III"/>
            <person name="Bloch C.A."/>
            <person name="Perna N.T."/>
            <person name="Burland V."/>
            <person name="Riley M."/>
            <person name="Collado-Vides J."/>
            <person name="Glasner J.D."/>
            <person name="Rode C.K."/>
            <person name="Mayhew G.F."/>
            <person name="Gregor J."/>
            <person name="Davis N.W."/>
            <person name="Kirkpatrick H.A."/>
            <person name="Goeden M.A."/>
            <person name="Rose D.J."/>
            <person name="Mau B."/>
            <person name="Shao Y."/>
        </authorList>
    </citation>
    <scope>NUCLEOTIDE SEQUENCE [LARGE SCALE GENOMIC DNA]</scope>
    <source>
        <strain>K12 / MG1655 / ATCC 47076</strain>
    </source>
</reference>
<reference key="3">
    <citation type="journal article" date="2006" name="Mol. Syst. Biol.">
        <title>Highly accurate genome sequences of Escherichia coli K-12 strains MG1655 and W3110.</title>
        <authorList>
            <person name="Hayashi K."/>
            <person name="Morooka N."/>
            <person name="Yamamoto Y."/>
            <person name="Fujita K."/>
            <person name="Isono K."/>
            <person name="Choi S."/>
            <person name="Ohtsubo E."/>
            <person name="Baba T."/>
            <person name="Wanner B.L."/>
            <person name="Mori H."/>
            <person name="Horiuchi T."/>
        </authorList>
    </citation>
    <scope>NUCLEOTIDE SEQUENCE [LARGE SCALE GENOMIC DNA]</scope>
    <source>
        <strain>K12 / W3110 / ATCC 27325 / DSM 5911</strain>
    </source>
</reference>
<reference key="4">
    <citation type="journal article" date="2006" name="J. Bacteriol.">
        <title>A selC-associated genomic island of the extraintestinal avian pathogenic Escherichia coli strain BEN2908 is involved in carbohydrate uptake and virulence.</title>
        <authorList>
            <person name="Chouikha I."/>
            <person name="Germon P."/>
            <person name="Bree A."/>
            <person name="Gilot P."/>
            <person name="Moulin-Schouleur M."/>
            <person name="Schouler C."/>
        </authorList>
    </citation>
    <scope>NUCLEOTIDE SEQUENCE [GENOMIC DNA] OF 158-396</scope>
    <source>
        <strain>BEN2908 / O2:K1:H5 / APEC</strain>
    </source>
</reference>
<reference key="5">
    <citation type="journal article" date="2005" name="Science">
        <title>Global topology analysis of the Escherichia coli inner membrane proteome.</title>
        <authorList>
            <person name="Daley D.O."/>
            <person name="Rapp M."/>
            <person name="Granseth E."/>
            <person name="Melen K."/>
            <person name="Drew D."/>
            <person name="von Heijne G."/>
        </authorList>
    </citation>
    <scope>SUBCELLULAR LOCATION</scope>
    <scope>TOPOLOGY [LARGE SCALE ANALYSIS]</scope>
    <source>
        <strain>K12 / MG1655 / ATCC 47076</strain>
    </source>
</reference>
<reference key="6">
    <citation type="journal article" date="2005" name="FEMS Microbiol. Lett.">
        <title>The yicM (nepI) gene of Escherichia coli encodes a major facilitator superfamily protein involved in efflux of purine ribonucleosides.</title>
        <authorList>
            <person name="Gronskiy S.V."/>
            <person name="Zakataeva N.P."/>
            <person name="Vitushkina M.V."/>
            <person name="Ptitsyn L.R."/>
            <person name="Altman I.B."/>
            <person name="Novikova A.E."/>
            <person name="Livshits V.A."/>
        </authorList>
    </citation>
    <scope>FUNCTION</scope>
    <scope>CATALYTIC ACTIVITY</scope>
    <scope>ACTIVITY REGULATION</scope>
    <scope>INDUCTION</scope>
    <scope>DISRUPTION PHENOTYPE</scope>
    <scope>CHARACTERIZATION OF TRANSLATIONAL START SITE</scope>
    <source>
        <strain>K12 / MG1655 / ATCC 47076</strain>
    </source>
</reference>
<name>NEPI_ECOLI</name>
<sequence length="396" mass="41842">MSEFIAENRGADAITRPNWSAVFSVAFCVACLIIVEFLPVSLLTPMAQDLGISEGVAGQSVTVTAFVAMFASLFITQTIQATDRRYVVILFAVLLTLSCLLVSFANSFSLLLIGRACLGLALGGFWAMSASLTMRLVPPRTVPKALSVIFGAVSIALVIAAPLGSFLGELIGWRNVFNAAAVMGVLCIFWIIKSLPSLPGEPSHQKQNTFRLLQRPGVMAGMIAIFMSFAGQFAFFTYIRPVYMNLAGFGVDGLTLVLLSFGIASFIGTSLSSFILKRSVKLALAGAPLILAVSALVLTLWGSDKIVATGVAIIWGLTFALVPVGWSTWITRSLADQAEKAGSIQVAVIQLANTCGAAIGGYALDNIGLTSPLMLSGTLMLLTALLVTAKVKMKKS</sequence>
<evidence type="ECO:0000255" key="1"/>
<evidence type="ECO:0000255" key="2">
    <source>
        <dbReference type="HAMAP-Rule" id="MF_01189"/>
    </source>
</evidence>
<evidence type="ECO:0000269" key="3">
    <source>
    </source>
</evidence>
<evidence type="ECO:0000269" key="4">
    <source>
    </source>
</evidence>
<evidence type="ECO:0000303" key="5">
    <source>
    </source>
</evidence>
<evidence type="ECO:0000305" key="6"/>